<protein>
    <recommendedName>
        <fullName evidence="1">Small ribosomal subunit protein bS20</fullName>
    </recommendedName>
    <alternativeName>
        <fullName evidence="2">30S ribosomal protein S20</fullName>
    </alternativeName>
</protein>
<comment type="function">
    <text evidence="1">Binds directly to 16S ribosomal RNA.</text>
</comment>
<comment type="similarity">
    <text evidence="1">Belongs to the bacterial ribosomal protein bS20 family.</text>
</comment>
<accession>B0T7D5</accession>
<reference key="1">
    <citation type="submission" date="2008-01" db="EMBL/GenBank/DDBJ databases">
        <title>Complete sequence of chromosome of Caulobacter sp. K31.</title>
        <authorList>
            <consortium name="US DOE Joint Genome Institute"/>
            <person name="Copeland A."/>
            <person name="Lucas S."/>
            <person name="Lapidus A."/>
            <person name="Barry K."/>
            <person name="Glavina del Rio T."/>
            <person name="Dalin E."/>
            <person name="Tice H."/>
            <person name="Pitluck S."/>
            <person name="Bruce D."/>
            <person name="Goodwin L."/>
            <person name="Thompson L.S."/>
            <person name="Brettin T."/>
            <person name="Detter J.C."/>
            <person name="Han C."/>
            <person name="Schmutz J."/>
            <person name="Larimer F."/>
            <person name="Land M."/>
            <person name="Hauser L."/>
            <person name="Kyrpides N."/>
            <person name="Kim E."/>
            <person name="Stephens C."/>
            <person name="Richardson P."/>
        </authorList>
    </citation>
    <scope>NUCLEOTIDE SEQUENCE [LARGE SCALE GENOMIC DNA]</scope>
    <source>
        <strain>K31</strain>
    </source>
</reference>
<organism>
    <name type="scientific">Caulobacter sp. (strain K31)</name>
    <dbReference type="NCBI Taxonomy" id="366602"/>
    <lineage>
        <taxon>Bacteria</taxon>
        <taxon>Pseudomonadati</taxon>
        <taxon>Pseudomonadota</taxon>
        <taxon>Alphaproteobacteria</taxon>
        <taxon>Caulobacterales</taxon>
        <taxon>Caulobacteraceae</taxon>
        <taxon>Caulobacter</taxon>
    </lineage>
</organism>
<proteinExistence type="inferred from homology"/>
<name>RS20_CAUSK</name>
<evidence type="ECO:0000255" key="1">
    <source>
        <dbReference type="HAMAP-Rule" id="MF_00500"/>
    </source>
</evidence>
<evidence type="ECO:0000305" key="2"/>
<dbReference type="EMBL" id="CP000927">
    <property type="protein sequence ID" value="ABZ74199.1"/>
    <property type="molecule type" value="Genomic_DNA"/>
</dbReference>
<dbReference type="SMR" id="B0T7D5"/>
<dbReference type="STRING" id="366602.Caul_5079"/>
<dbReference type="KEGG" id="cak:Caul_5079"/>
<dbReference type="eggNOG" id="COG0268">
    <property type="taxonomic scope" value="Bacteria"/>
</dbReference>
<dbReference type="HOGENOM" id="CLU_160655_3_0_5"/>
<dbReference type="OrthoDB" id="9807974at2"/>
<dbReference type="GO" id="GO:0005829">
    <property type="term" value="C:cytosol"/>
    <property type="evidence" value="ECO:0007669"/>
    <property type="project" value="TreeGrafter"/>
</dbReference>
<dbReference type="GO" id="GO:0015935">
    <property type="term" value="C:small ribosomal subunit"/>
    <property type="evidence" value="ECO:0007669"/>
    <property type="project" value="TreeGrafter"/>
</dbReference>
<dbReference type="GO" id="GO:0070181">
    <property type="term" value="F:small ribosomal subunit rRNA binding"/>
    <property type="evidence" value="ECO:0007669"/>
    <property type="project" value="TreeGrafter"/>
</dbReference>
<dbReference type="GO" id="GO:0003735">
    <property type="term" value="F:structural constituent of ribosome"/>
    <property type="evidence" value="ECO:0007669"/>
    <property type="project" value="InterPro"/>
</dbReference>
<dbReference type="GO" id="GO:0006412">
    <property type="term" value="P:translation"/>
    <property type="evidence" value="ECO:0007669"/>
    <property type="project" value="UniProtKB-UniRule"/>
</dbReference>
<dbReference type="Gene3D" id="1.20.58.110">
    <property type="entry name" value="Ribosomal protein S20"/>
    <property type="match status" value="1"/>
</dbReference>
<dbReference type="HAMAP" id="MF_00500">
    <property type="entry name" value="Ribosomal_bS20"/>
    <property type="match status" value="1"/>
</dbReference>
<dbReference type="InterPro" id="IPR002583">
    <property type="entry name" value="Ribosomal_bS20"/>
</dbReference>
<dbReference type="InterPro" id="IPR036510">
    <property type="entry name" value="Ribosomal_bS20_sf"/>
</dbReference>
<dbReference type="NCBIfam" id="TIGR00029">
    <property type="entry name" value="S20"/>
    <property type="match status" value="1"/>
</dbReference>
<dbReference type="PANTHER" id="PTHR33398">
    <property type="entry name" value="30S RIBOSOMAL PROTEIN S20"/>
    <property type="match status" value="1"/>
</dbReference>
<dbReference type="PANTHER" id="PTHR33398:SF1">
    <property type="entry name" value="SMALL RIBOSOMAL SUBUNIT PROTEIN BS20C"/>
    <property type="match status" value="1"/>
</dbReference>
<dbReference type="Pfam" id="PF01649">
    <property type="entry name" value="Ribosomal_S20p"/>
    <property type="match status" value="1"/>
</dbReference>
<dbReference type="SUPFAM" id="SSF46992">
    <property type="entry name" value="Ribosomal protein S20"/>
    <property type="match status" value="1"/>
</dbReference>
<feature type="chain" id="PRO_1000081418" description="Small ribosomal subunit protein bS20">
    <location>
        <begin position="1"/>
        <end position="91"/>
    </location>
</feature>
<sequence>MANNPGAKKAIRKIARRTEVNTARRSRVRTFLRKFEDALAAGDAAVAKAAFIEAQSELMRAVSKGVVHPNTGSRKVSRLAARLKKLDQAAA</sequence>
<gene>
    <name evidence="1" type="primary">rpsT</name>
    <name type="ordered locus">Caul_5079</name>
</gene>
<keyword id="KW-0687">Ribonucleoprotein</keyword>
<keyword id="KW-0689">Ribosomal protein</keyword>
<keyword id="KW-0694">RNA-binding</keyword>
<keyword id="KW-0699">rRNA-binding</keyword>